<organism>
    <name type="scientific">Nitrosococcus oceani (strain ATCC 19707 / BCRC 17464 / JCM 30415 / NCIMB 11848 / C-107)</name>
    <dbReference type="NCBI Taxonomy" id="323261"/>
    <lineage>
        <taxon>Bacteria</taxon>
        <taxon>Pseudomonadati</taxon>
        <taxon>Pseudomonadota</taxon>
        <taxon>Gammaproteobacteria</taxon>
        <taxon>Chromatiales</taxon>
        <taxon>Chromatiaceae</taxon>
        <taxon>Nitrosococcus</taxon>
    </lineage>
</organism>
<reference key="1">
    <citation type="journal article" date="2006" name="Appl. Environ. Microbiol.">
        <title>Complete genome sequence of the marine, chemolithoautotrophic, ammonia-oxidizing bacterium Nitrosococcus oceani ATCC 19707.</title>
        <authorList>
            <person name="Klotz M.G."/>
            <person name="Arp D.J."/>
            <person name="Chain P.S.G."/>
            <person name="El-Sheikh A.F."/>
            <person name="Hauser L.J."/>
            <person name="Hommes N.G."/>
            <person name="Larimer F.W."/>
            <person name="Malfatti S.A."/>
            <person name="Norton J.M."/>
            <person name="Poret-Peterson A.T."/>
            <person name="Vergez L.M."/>
            <person name="Ward B.B."/>
        </authorList>
    </citation>
    <scope>NUCLEOTIDE SEQUENCE [LARGE SCALE GENOMIC DNA]</scope>
    <source>
        <strain>ATCC 19707 / BCRC 17464 / JCM 30415 / NCIMB 11848 / C-107</strain>
    </source>
</reference>
<feature type="chain" id="PRO_0000341025" description="Ribosome-recycling factor">
    <location>
        <begin position="1"/>
        <end position="187"/>
    </location>
</feature>
<name>RRF_NITOC</name>
<sequence length="187" mass="21419">MIMIDEIQEDAAQRMDKSLNALKQAFARLRANRAHTSLLDHITVSYYGNNVPLNQVANVSVEDARTLTVTPWERQMVPVIEKAIMTSELGLNPVTAGTVIRVPLPVLTEERRREMVRLVRQEAEAARVAMRNIRRDSNHTIKELIKEKEISEDDQRRAEEAIQKITDNHITQVDELLAVKEQDLMEV</sequence>
<protein>
    <recommendedName>
        <fullName evidence="1">Ribosome-recycling factor</fullName>
        <shortName evidence="1">RRF</shortName>
    </recommendedName>
    <alternativeName>
        <fullName evidence="1">Ribosome-releasing factor</fullName>
    </alternativeName>
</protein>
<gene>
    <name evidence="1" type="primary">frr</name>
    <name type="ordered locus">Noc_0811</name>
</gene>
<comment type="function">
    <text evidence="1">Responsible for the release of ribosomes from messenger RNA at the termination of protein biosynthesis. May increase the efficiency of translation by recycling ribosomes from one round of translation to another.</text>
</comment>
<comment type="subcellular location">
    <subcellularLocation>
        <location evidence="1">Cytoplasm</location>
    </subcellularLocation>
</comment>
<comment type="similarity">
    <text evidence="1">Belongs to the RRF family.</text>
</comment>
<keyword id="KW-0963">Cytoplasm</keyword>
<keyword id="KW-0648">Protein biosynthesis</keyword>
<keyword id="KW-1185">Reference proteome</keyword>
<dbReference type="EMBL" id="CP000127">
    <property type="protein sequence ID" value="ABA57324.1"/>
    <property type="molecule type" value="Genomic_DNA"/>
</dbReference>
<dbReference type="SMR" id="Q3JCX2"/>
<dbReference type="FunCoup" id="Q3JCX2">
    <property type="interactions" value="575"/>
</dbReference>
<dbReference type="STRING" id="323261.Noc_0811"/>
<dbReference type="KEGG" id="noc:Noc_0811"/>
<dbReference type="eggNOG" id="COG0233">
    <property type="taxonomic scope" value="Bacteria"/>
</dbReference>
<dbReference type="HOGENOM" id="CLU_073981_2_1_6"/>
<dbReference type="InParanoid" id="Q3JCX2"/>
<dbReference type="Proteomes" id="UP000006838">
    <property type="component" value="Chromosome"/>
</dbReference>
<dbReference type="GO" id="GO:0005829">
    <property type="term" value="C:cytosol"/>
    <property type="evidence" value="ECO:0007669"/>
    <property type="project" value="GOC"/>
</dbReference>
<dbReference type="GO" id="GO:0043023">
    <property type="term" value="F:ribosomal large subunit binding"/>
    <property type="evidence" value="ECO:0007669"/>
    <property type="project" value="TreeGrafter"/>
</dbReference>
<dbReference type="GO" id="GO:0002184">
    <property type="term" value="P:cytoplasmic translational termination"/>
    <property type="evidence" value="ECO:0007669"/>
    <property type="project" value="TreeGrafter"/>
</dbReference>
<dbReference type="CDD" id="cd00520">
    <property type="entry name" value="RRF"/>
    <property type="match status" value="1"/>
</dbReference>
<dbReference type="FunFam" id="1.10.132.20:FF:000001">
    <property type="entry name" value="Ribosome-recycling factor"/>
    <property type="match status" value="1"/>
</dbReference>
<dbReference type="FunFam" id="3.30.1360.40:FF:000001">
    <property type="entry name" value="Ribosome-recycling factor"/>
    <property type="match status" value="1"/>
</dbReference>
<dbReference type="Gene3D" id="3.30.1360.40">
    <property type="match status" value="1"/>
</dbReference>
<dbReference type="Gene3D" id="1.10.132.20">
    <property type="entry name" value="Ribosome-recycling factor"/>
    <property type="match status" value="1"/>
</dbReference>
<dbReference type="HAMAP" id="MF_00040">
    <property type="entry name" value="RRF"/>
    <property type="match status" value="1"/>
</dbReference>
<dbReference type="InterPro" id="IPR002661">
    <property type="entry name" value="Ribosome_recyc_fac"/>
</dbReference>
<dbReference type="InterPro" id="IPR023584">
    <property type="entry name" value="Ribosome_recyc_fac_dom"/>
</dbReference>
<dbReference type="InterPro" id="IPR036191">
    <property type="entry name" value="RRF_sf"/>
</dbReference>
<dbReference type="NCBIfam" id="TIGR00496">
    <property type="entry name" value="frr"/>
    <property type="match status" value="1"/>
</dbReference>
<dbReference type="PANTHER" id="PTHR20982:SF3">
    <property type="entry name" value="MITOCHONDRIAL RIBOSOME RECYCLING FACTOR PSEUDO 1"/>
    <property type="match status" value="1"/>
</dbReference>
<dbReference type="PANTHER" id="PTHR20982">
    <property type="entry name" value="RIBOSOME RECYCLING FACTOR"/>
    <property type="match status" value="1"/>
</dbReference>
<dbReference type="Pfam" id="PF01765">
    <property type="entry name" value="RRF"/>
    <property type="match status" value="1"/>
</dbReference>
<dbReference type="SUPFAM" id="SSF55194">
    <property type="entry name" value="Ribosome recycling factor, RRF"/>
    <property type="match status" value="1"/>
</dbReference>
<accession>Q3JCX2</accession>
<proteinExistence type="inferred from homology"/>
<evidence type="ECO:0000255" key="1">
    <source>
        <dbReference type="HAMAP-Rule" id="MF_00040"/>
    </source>
</evidence>